<protein>
    <recommendedName>
        <fullName>Dehydrogenase/reductase SDR family member 11</fullName>
    </recommendedName>
    <alternativeName>
        <fullName evidence="4">17-beta-hydroxysteroid dehydrogenase</fullName>
    </alternativeName>
    <alternativeName>
        <fullName evidence="4">3-beta-hydroxysteroid 3-dehydrogenase</fullName>
        <ecNumber evidence="1">1.1.1.270</ecNumber>
    </alternativeName>
    <alternativeName>
        <fullName evidence="4">Estradiol 17-beta-dehydrogenase</fullName>
        <ecNumber evidence="1">1.1.1.62</ecNumber>
    </alternativeName>
    <alternativeName>
        <fullName evidence="1">Short-chain dehydrogenase/reductase family 24C member 1</fullName>
    </alternativeName>
</protein>
<comment type="function">
    <text evidence="1">Catalyzes the conversion of the 17-keto group of estrone, 4- and 5-androstenes and 5-alpha-androstanes into their 17-beta-hydroxyl metabolites and the conversion of the 3-keto group of 3-, 3,17- and 3,20- diketosteroids into their 3-hydroxyl metabolites. Exhibits reductive 3-beta-hydroxysteroid dehydrogenase activity toward 5-beta-androstanes, 5-beta-pregnanes, 4-pregnenes and bile acids. May also reduce endogenous and exogenous alpha-dicarbonyl compounds and xenobiotic alicyclic ketones.</text>
</comment>
<comment type="catalytic activity">
    <reaction evidence="1">
        <text>a 3beta-hydroxysteroid + NADP(+) = a 3-oxosteroid + NADPH + H(+)</text>
        <dbReference type="Rhea" id="RHEA:34787"/>
        <dbReference type="ChEBI" id="CHEBI:15378"/>
        <dbReference type="ChEBI" id="CHEBI:36836"/>
        <dbReference type="ChEBI" id="CHEBI:47788"/>
        <dbReference type="ChEBI" id="CHEBI:57783"/>
        <dbReference type="ChEBI" id="CHEBI:58349"/>
        <dbReference type="EC" id="1.1.1.270"/>
    </reaction>
</comment>
<comment type="catalytic activity">
    <reaction evidence="1">
        <text>17beta-estradiol + NAD(+) = estrone + NADH + H(+)</text>
        <dbReference type="Rhea" id="RHEA:24612"/>
        <dbReference type="ChEBI" id="CHEBI:15378"/>
        <dbReference type="ChEBI" id="CHEBI:16469"/>
        <dbReference type="ChEBI" id="CHEBI:17263"/>
        <dbReference type="ChEBI" id="CHEBI:57540"/>
        <dbReference type="ChEBI" id="CHEBI:57945"/>
        <dbReference type="EC" id="1.1.1.62"/>
    </reaction>
</comment>
<comment type="catalytic activity">
    <reaction evidence="1">
        <text>17beta-estradiol + NADP(+) = estrone + NADPH + H(+)</text>
        <dbReference type="Rhea" id="RHEA:24616"/>
        <dbReference type="ChEBI" id="CHEBI:15378"/>
        <dbReference type="ChEBI" id="CHEBI:16469"/>
        <dbReference type="ChEBI" id="CHEBI:17263"/>
        <dbReference type="ChEBI" id="CHEBI:57783"/>
        <dbReference type="ChEBI" id="CHEBI:58349"/>
        <dbReference type="EC" id="1.1.1.62"/>
    </reaction>
</comment>
<comment type="activity regulation">
    <text evidence="1">Inhibited by flavonoids including apigenin, luteolin, genistein, kaempferol and quercetin and also by carbenoxolone, zearalenone, glycyrrhetinic, curcumin and flufenamic acid.</text>
</comment>
<comment type="pathway">
    <text evidence="1">Steroid biosynthesis; estrogen biosynthesis.</text>
</comment>
<comment type="subcellular location">
    <subcellularLocation>
        <location evidence="4">Secreted</location>
    </subcellularLocation>
</comment>
<comment type="similarity">
    <text evidence="4">Belongs to the short-chain dehydrogenases/reductases (SDR) family.</text>
</comment>
<evidence type="ECO:0000250" key="1">
    <source>
        <dbReference type="UniProtKB" id="Q6UWP2"/>
    </source>
</evidence>
<evidence type="ECO:0000255" key="2"/>
<evidence type="ECO:0000255" key="3">
    <source>
        <dbReference type="PROSITE-ProRule" id="PRU10001"/>
    </source>
</evidence>
<evidence type="ECO:0000305" key="4"/>
<accession>Q71R50</accession>
<sequence length="255" mass="27727">MERWTGRVALVTGASVGIGAAVARALVQHGMKVVGCARSVDKIEKLAAECQSAGYPGTLIPYKCDLSNEEEILSMFSAIKTLHQGVDVCINNAGLARPEPLLSGKTEGWRTMIDVNVMAVSICTREAYQSMKERNIDDGHIININSMNGHSVVPQSVVHFYSATKYAVTALTEGLRQELREAKTHIRATCISPGLVETGFAFKLHDNDPERAAATYESIRCLKAEDMANAVIYVLSAPPHVQIGDIQMRPTEQIS</sequence>
<reference key="1">
    <citation type="submission" date="2001-04" db="EMBL/GenBank/DDBJ databases">
        <title>A novel short-chain dehydrogenase/reductase.</title>
        <authorList>
            <person name="Kato A."/>
            <person name="Shintani T."/>
            <person name="Noda M."/>
        </authorList>
    </citation>
    <scope>NUCLEOTIDE SEQUENCE [MRNA]</scope>
    <source>
        <tissue>Retina</tissue>
    </source>
</reference>
<feature type="signal peptide" evidence="2">
    <location>
        <begin position="1"/>
        <end position="23"/>
    </location>
</feature>
<feature type="chain" id="PRO_0000045492" description="Dehydrogenase/reductase SDR family member 11">
    <location>
        <begin position="24"/>
        <end position="255"/>
    </location>
</feature>
<feature type="active site" description="Proton acceptor" evidence="3">
    <location>
        <position position="161"/>
    </location>
</feature>
<feature type="binding site" evidence="1">
    <location>
        <begin position="13"/>
        <end position="18"/>
    </location>
    <ligand>
        <name>NADP(+)</name>
        <dbReference type="ChEBI" id="CHEBI:58349"/>
    </ligand>
</feature>
<feature type="binding site" evidence="1">
    <location>
        <begin position="38"/>
        <end position="39"/>
    </location>
    <ligand>
        <name>NADP(+)</name>
        <dbReference type="ChEBI" id="CHEBI:58349"/>
    </ligand>
</feature>
<feature type="binding site" evidence="1">
    <location>
        <position position="44"/>
    </location>
    <ligand>
        <name>NADP(+)</name>
        <dbReference type="ChEBI" id="CHEBI:58349"/>
    </ligand>
</feature>
<feature type="binding site" evidence="1">
    <location>
        <begin position="65"/>
        <end position="66"/>
    </location>
    <ligand>
        <name>NADP(+)</name>
        <dbReference type="ChEBI" id="CHEBI:58349"/>
    </ligand>
</feature>
<feature type="binding site" evidence="1">
    <location>
        <position position="92"/>
    </location>
    <ligand>
        <name>NADP(+)</name>
        <dbReference type="ChEBI" id="CHEBI:58349"/>
    </ligand>
</feature>
<feature type="binding site" evidence="1">
    <location>
        <position position="146"/>
    </location>
    <ligand>
        <name>substrate</name>
    </ligand>
</feature>
<feature type="binding site" evidence="1">
    <location>
        <position position="161"/>
    </location>
    <ligand>
        <name>NADP(+)</name>
        <dbReference type="ChEBI" id="CHEBI:58349"/>
    </ligand>
</feature>
<feature type="binding site" evidence="1">
    <location>
        <position position="161"/>
    </location>
    <ligand>
        <name>substrate</name>
    </ligand>
</feature>
<feature type="binding site" evidence="1">
    <location>
        <position position="165"/>
    </location>
    <ligand>
        <name>NADP(+)</name>
        <dbReference type="ChEBI" id="CHEBI:58349"/>
    </ligand>
</feature>
<feature type="binding site" evidence="1">
    <location>
        <begin position="196"/>
        <end position="199"/>
    </location>
    <ligand>
        <name>NADP(+)</name>
        <dbReference type="ChEBI" id="CHEBI:58349"/>
    </ligand>
</feature>
<feature type="binding site" evidence="1">
    <location>
        <position position="203"/>
    </location>
    <ligand>
        <name>NADP(+)</name>
        <dbReference type="ChEBI" id="CHEBI:58349"/>
    </ligand>
</feature>
<name>DHR11_CHICK</name>
<organism>
    <name type="scientific">Gallus gallus</name>
    <name type="common">Chicken</name>
    <dbReference type="NCBI Taxonomy" id="9031"/>
    <lineage>
        <taxon>Eukaryota</taxon>
        <taxon>Metazoa</taxon>
        <taxon>Chordata</taxon>
        <taxon>Craniata</taxon>
        <taxon>Vertebrata</taxon>
        <taxon>Euteleostomi</taxon>
        <taxon>Archelosauria</taxon>
        <taxon>Archosauria</taxon>
        <taxon>Dinosauria</taxon>
        <taxon>Saurischia</taxon>
        <taxon>Theropoda</taxon>
        <taxon>Coelurosauria</taxon>
        <taxon>Aves</taxon>
        <taxon>Neognathae</taxon>
        <taxon>Galloanserae</taxon>
        <taxon>Galliformes</taxon>
        <taxon>Phasianidae</taxon>
        <taxon>Phasianinae</taxon>
        <taxon>Gallus</taxon>
    </lineage>
</organism>
<proteinExistence type="evidence at transcript level"/>
<keyword id="KW-0443">Lipid metabolism</keyword>
<keyword id="KW-0521">NADP</keyword>
<keyword id="KW-0547">Nucleotide-binding</keyword>
<keyword id="KW-0560">Oxidoreductase</keyword>
<keyword id="KW-1185">Reference proteome</keyword>
<keyword id="KW-0964">Secreted</keyword>
<keyword id="KW-0732">Signal</keyword>
<keyword id="KW-0753">Steroid metabolism</keyword>
<dbReference type="EC" id="1.1.1.270" evidence="1"/>
<dbReference type="EC" id="1.1.1.62" evidence="1"/>
<dbReference type="EMBL" id="AF373778">
    <property type="protein sequence ID" value="AAQ02772.1"/>
    <property type="molecule type" value="mRNA"/>
</dbReference>
<dbReference type="RefSeq" id="NP_989838.1">
    <property type="nucleotide sequence ID" value="NM_204507.2"/>
</dbReference>
<dbReference type="SMR" id="Q71R50"/>
<dbReference type="FunCoup" id="Q71R50">
    <property type="interactions" value="123"/>
</dbReference>
<dbReference type="STRING" id="9031.ENSGALP00000008664"/>
<dbReference type="PaxDb" id="9031-ENSGALP00000008664"/>
<dbReference type="Ensembl" id="ENSGALT00010070553.1">
    <property type="protein sequence ID" value="ENSGALP00010043244.1"/>
    <property type="gene ID" value="ENSGALG00010029194.1"/>
</dbReference>
<dbReference type="GeneID" id="395172"/>
<dbReference type="KEGG" id="gga:395172"/>
<dbReference type="CTD" id="79154"/>
<dbReference type="VEuPathDB" id="HostDB:geneid_395172"/>
<dbReference type="eggNOG" id="KOG1205">
    <property type="taxonomic scope" value="Eukaryota"/>
</dbReference>
<dbReference type="GeneTree" id="ENSGT00840000129887"/>
<dbReference type="HOGENOM" id="CLU_010194_2_10_1"/>
<dbReference type="InParanoid" id="Q71R50"/>
<dbReference type="OMA" id="WRWMWET"/>
<dbReference type="OrthoDB" id="1933717at2759"/>
<dbReference type="PhylomeDB" id="Q71R50"/>
<dbReference type="TreeFam" id="TF324174"/>
<dbReference type="UniPathway" id="UPA00769"/>
<dbReference type="PRO" id="PR:Q71R50"/>
<dbReference type="Proteomes" id="UP000000539">
    <property type="component" value="Chromosome 19"/>
</dbReference>
<dbReference type="Bgee" id="ENSGALG00000005403">
    <property type="expression patterns" value="Expressed in kidney and 13 other cell types or tissues"/>
</dbReference>
<dbReference type="GO" id="GO:0005576">
    <property type="term" value="C:extracellular region"/>
    <property type="evidence" value="ECO:0007669"/>
    <property type="project" value="UniProtKB-SubCell"/>
</dbReference>
<dbReference type="GO" id="GO:0072582">
    <property type="term" value="F:17-beta-hydroxysteroid dehydrogenase (NADP+) activity"/>
    <property type="evidence" value="ECO:0007669"/>
    <property type="project" value="Ensembl"/>
</dbReference>
<dbReference type="GO" id="GO:0000253">
    <property type="term" value="F:3-beta-hydroxysteroid 3-dehydrogenase (NADP+) activity"/>
    <property type="evidence" value="ECO:0007669"/>
    <property type="project" value="UniProtKB-EC"/>
</dbReference>
<dbReference type="GO" id="GO:0004303">
    <property type="term" value="F:estradiol 17-beta-dehydrogenase [NAD(P)+] activity"/>
    <property type="evidence" value="ECO:0007669"/>
    <property type="project" value="UniProtKB-EC"/>
</dbReference>
<dbReference type="GO" id="GO:0000166">
    <property type="term" value="F:nucleotide binding"/>
    <property type="evidence" value="ECO:0007669"/>
    <property type="project" value="UniProtKB-KW"/>
</dbReference>
<dbReference type="GO" id="GO:0006703">
    <property type="term" value="P:estrogen biosynthetic process"/>
    <property type="evidence" value="ECO:0007669"/>
    <property type="project" value="UniProtKB-UniPathway"/>
</dbReference>
<dbReference type="CDD" id="cd05343">
    <property type="entry name" value="Mgc4172-like_SDR_c"/>
    <property type="match status" value="1"/>
</dbReference>
<dbReference type="FunFam" id="3.40.50.720:FF:000047">
    <property type="entry name" value="NADP-dependent L-serine/L-allo-threonine dehydrogenase"/>
    <property type="match status" value="1"/>
</dbReference>
<dbReference type="Gene3D" id="3.40.50.720">
    <property type="entry name" value="NAD(P)-binding Rossmann-like Domain"/>
    <property type="match status" value="1"/>
</dbReference>
<dbReference type="InterPro" id="IPR036291">
    <property type="entry name" value="NAD(P)-bd_dom_sf"/>
</dbReference>
<dbReference type="InterPro" id="IPR020904">
    <property type="entry name" value="Sc_DH/Rdtase_CS"/>
</dbReference>
<dbReference type="InterPro" id="IPR002347">
    <property type="entry name" value="SDR_fam"/>
</dbReference>
<dbReference type="PANTHER" id="PTHR43115">
    <property type="entry name" value="DEHYDROGENASE/REDUCTASE SDR FAMILY MEMBER 11"/>
    <property type="match status" value="1"/>
</dbReference>
<dbReference type="PANTHER" id="PTHR43115:SF4">
    <property type="entry name" value="DEHYDROGENASE_REDUCTASE SDR FAMILY MEMBER 11"/>
    <property type="match status" value="1"/>
</dbReference>
<dbReference type="Pfam" id="PF00106">
    <property type="entry name" value="adh_short"/>
    <property type="match status" value="1"/>
</dbReference>
<dbReference type="PRINTS" id="PR00081">
    <property type="entry name" value="GDHRDH"/>
</dbReference>
<dbReference type="PRINTS" id="PR00080">
    <property type="entry name" value="SDRFAMILY"/>
</dbReference>
<dbReference type="SUPFAM" id="SSF51735">
    <property type="entry name" value="NAD(P)-binding Rossmann-fold domains"/>
    <property type="match status" value="1"/>
</dbReference>
<dbReference type="PROSITE" id="PS00061">
    <property type="entry name" value="ADH_SHORT"/>
    <property type="match status" value="1"/>
</dbReference>
<gene>
    <name type="primary">DHRS11</name>
    <name evidence="1" type="synonym">SDR24C1</name>
</gene>